<feature type="chain" id="PRO_0000194541" description="Transcriptional regulator MxiE">
    <location>
        <begin position="1"/>
        <end position="210"/>
    </location>
</feature>
<feature type="domain" description="HTH araC/xylS-type" evidence="1">
    <location>
        <begin position="99"/>
        <end position="199"/>
    </location>
</feature>
<feature type="DNA-binding region" description="H-T-H motif" evidence="1">
    <location>
        <begin position="118"/>
        <end position="139"/>
    </location>
</feature>
<feature type="DNA-binding region" description="H-T-H motif" evidence="1">
    <location>
        <begin position="166"/>
        <end position="189"/>
    </location>
</feature>
<feature type="sequence conflict" description="In Ref. 1; CAA47643." evidence="2" ref="1">
    <original>A</original>
    <variation>R</variation>
    <location>
        <position position="176"/>
    </location>
</feature>
<keyword id="KW-0238">DNA-binding</keyword>
<keyword id="KW-0614">Plasmid</keyword>
<keyword id="KW-1185">Reference proteome</keyword>
<keyword id="KW-0804">Transcription</keyword>
<keyword id="KW-0805">Transcription regulation</keyword>
<keyword id="KW-0813">Transport</keyword>
<keyword id="KW-0843">Virulence</keyword>
<organism>
    <name type="scientific">Shigella flexneri</name>
    <dbReference type="NCBI Taxonomy" id="623"/>
    <lineage>
        <taxon>Bacteria</taxon>
        <taxon>Pseudomonadati</taxon>
        <taxon>Pseudomonadota</taxon>
        <taxon>Gammaproteobacteria</taxon>
        <taxon>Enterobacterales</taxon>
        <taxon>Enterobacteriaceae</taxon>
        <taxon>Shigella</taxon>
    </lineage>
</organism>
<geneLocation type="plasmid">
    <name>pWR100</name>
</geneLocation>
<geneLocation type="plasmid">
    <name>pWR501</name>
</geneLocation>
<geneLocation type="plasmid">
    <name>pINV_F6_M1382</name>
</geneLocation>
<geneLocation type="plasmid">
    <name>pCP301</name>
</geneLocation>
<reference key="1">
    <citation type="journal article" date="1993" name="Mol. Microbiol.">
        <title>MxiD, an outer membrane protein necessary for the secretion of the Shigella flexneri lpa invasins.</title>
        <authorList>
            <person name="Allaoui A."/>
            <person name="Sansonetti P.J."/>
            <person name="Parsot C."/>
        </authorList>
    </citation>
    <scope>NUCLEOTIDE SEQUENCE [GENOMIC DNA]</scope>
    <source>
        <strain>M90T / Serotype 5a</strain>
        <plasmid>pWR100</plasmid>
    </source>
</reference>
<reference key="2">
    <citation type="journal article" date="2000" name="Mol. Microbiol.">
        <title>The virulence plasmid pWR100 and the repertoire of proteins secreted by the type III secretion apparatus of Shigella flexneri.</title>
        <authorList>
            <person name="Buchrieser C."/>
            <person name="Glaser P."/>
            <person name="Rusniok C."/>
            <person name="Nedjari H."/>
            <person name="d'Hauteville H."/>
            <person name="Kunst F."/>
            <person name="Sansonetti P.J."/>
            <person name="Parsot C."/>
        </authorList>
    </citation>
    <scope>NUCLEOTIDE SEQUENCE [GENOMIC DNA]</scope>
    <source>
        <strain>M90T / Serotype 5a</strain>
        <plasmid>pWR100</plasmid>
    </source>
</reference>
<reference key="3">
    <citation type="journal article" date="2001" name="Infect. Immun.">
        <title>Complete DNA sequence and analysis of the large virulence plasmid of Shigella flexneri.</title>
        <authorList>
            <person name="Venkatesan M.M."/>
            <person name="Goldberg M.B."/>
            <person name="Rose D.J."/>
            <person name="Grotbeck E.J."/>
            <person name="Burland V."/>
            <person name="Blattner F.R."/>
        </authorList>
    </citation>
    <scope>NUCLEOTIDE SEQUENCE [GENOMIC DNA]</scope>
    <source>
        <strain>M90T / Serotype 5a</strain>
        <plasmid>pWR501</plasmid>
    </source>
</reference>
<reference key="4">
    <citation type="journal article" date="2003" name="Infect. Immun.">
        <title>Comparison of two major forms of the Shigella virulence plasmid pINV: positive selection is a major force driving the divergence.</title>
        <authorList>
            <person name="Lan R."/>
            <person name="Stevenson G."/>
            <person name="Reeves P.R."/>
        </authorList>
    </citation>
    <scope>NUCLEOTIDE SEQUENCE [GENOMIC DNA]</scope>
    <source>
        <strain>M1382 / Serotype 6</strain>
        <plasmid>pINV_F6_M1382</plasmid>
    </source>
</reference>
<reference key="5">
    <citation type="journal article" date="2002" name="Nucleic Acids Res.">
        <title>Genome sequence of Shigella flexneri 2a: insights into pathogenicity through comparison with genomes of Escherichia coli K12 and O157.</title>
        <authorList>
            <person name="Jin Q."/>
            <person name="Yuan Z."/>
            <person name="Xu J."/>
            <person name="Wang Y."/>
            <person name="Shen Y."/>
            <person name="Lu W."/>
            <person name="Wang J."/>
            <person name="Liu H."/>
            <person name="Yang J."/>
            <person name="Yang F."/>
            <person name="Zhang X."/>
            <person name="Zhang J."/>
            <person name="Yang G."/>
            <person name="Wu H."/>
            <person name="Qu D."/>
            <person name="Dong J."/>
            <person name="Sun L."/>
            <person name="Xue Y."/>
            <person name="Zhao A."/>
            <person name="Gao Y."/>
            <person name="Zhu J."/>
            <person name="Kan B."/>
            <person name="Ding K."/>
            <person name="Chen S."/>
            <person name="Cheng H."/>
            <person name="Yao Z."/>
            <person name="He B."/>
            <person name="Chen R."/>
            <person name="Ma D."/>
            <person name="Qiang B."/>
            <person name="Wen Y."/>
            <person name="Hou Y."/>
            <person name="Yu J."/>
        </authorList>
    </citation>
    <scope>NUCLEOTIDE SEQUENCE [LARGE SCALE GENOMIC DNA]</scope>
    <source>
        <strain>301 / Serotype 2a</strain>
        <plasmid>pCP301</plasmid>
    </source>
</reference>
<comment type="function">
    <text>Necessary for the secretion of ipa invasins. Probable transcriptional regulatory protein.</text>
</comment>
<accession>P0A2S7</accession>
<accession>Q04642</accession>
<accession>Q55292</accession>
<protein>
    <recommendedName>
        <fullName>Transcriptional regulator MxiE</fullName>
    </recommendedName>
</protein>
<sequence>MEGFFFVRNQNIKFSDNVNYHYRFNINSCAKFLAFWDYFSGALVEHSHAEKCIHFYHENDLRDSCNTESMLDKLMLRFIFSSDQNVSNALAMIRMTESYHLVLYLLRTIEKEKEVRIKSLTEHYGVSEAYFRSLCRKALGAKVKEQLNTWRLVNGLLDVFLHNQTITSAAMNNGYASTSHFSNEIKTRLGFSARELSNITFLVKKINEKI</sequence>
<proteinExistence type="predicted"/>
<name>MXIE_SHIFL</name>
<gene>
    <name type="primary">mxiE</name>
    <name type="ordered locus">CP0144</name>
</gene>
<evidence type="ECO:0000255" key="1">
    <source>
        <dbReference type="PROSITE-ProRule" id="PRU00593"/>
    </source>
</evidence>
<evidence type="ECO:0000305" key="2"/>
<dbReference type="EMBL" id="X67206">
    <property type="protein sequence ID" value="CAA47643.1"/>
    <property type="molecule type" value="Genomic_DNA"/>
</dbReference>
<dbReference type="EMBL" id="AL391753">
    <property type="protein sequence ID" value="CAC05819.1"/>
    <property type="molecule type" value="Genomic_DNA"/>
</dbReference>
<dbReference type="EMBL" id="AF348706">
    <property type="protein sequence ID" value="AAK18463.1"/>
    <property type="molecule type" value="Genomic_DNA"/>
</dbReference>
<dbReference type="EMBL" id="AY206439">
    <property type="protein sequence ID" value="AAP79007.1"/>
    <property type="molecule type" value="Genomic_DNA"/>
</dbReference>
<dbReference type="EMBL" id="AF386526">
    <property type="protein sequence ID" value="AAL72330.1"/>
    <property type="molecule type" value="Genomic_DNA"/>
</dbReference>
<dbReference type="PIR" id="S28067">
    <property type="entry name" value="S28067"/>
</dbReference>
<dbReference type="RefSeq" id="NP_085307.1">
    <property type="nucleotide sequence ID" value="NC_002698.1"/>
</dbReference>
<dbReference type="RefSeq" id="NP_858277.1">
    <property type="nucleotide sequence ID" value="NC_004851.1"/>
</dbReference>
<dbReference type="RefSeq" id="WP_000398259.1">
    <property type="nucleotide sequence ID" value="NZ_WPGS01000043.1"/>
</dbReference>
<dbReference type="RefSeq" id="YP_009062501.1">
    <property type="nucleotide sequence ID" value="NC_024996.1"/>
</dbReference>
<dbReference type="SMR" id="P0A2S7"/>
<dbReference type="IntAct" id="P0A2S7">
    <property type="interactions" value="1"/>
</dbReference>
<dbReference type="PaxDb" id="198214-CP0144"/>
<dbReference type="GeneID" id="1238033"/>
<dbReference type="KEGG" id="sfl:CP0144"/>
<dbReference type="PATRIC" id="fig|623.157.peg.5378"/>
<dbReference type="HOGENOM" id="CLU_082966_1_0_6"/>
<dbReference type="Proteomes" id="UP000001006">
    <property type="component" value="Plasmid pCP301"/>
</dbReference>
<dbReference type="GO" id="GO:0003700">
    <property type="term" value="F:DNA-binding transcription factor activity"/>
    <property type="evidence" value="ECO:0007669"/>
    <property type="project" value="InterPro"/>
</dbReference>
<dbReference type="GO" id="GO:0043565">
    <property type="term" value="F:sequence-specific DNA binding"/>
    <property type="evidence" value="ECO:0007669"/>
    <property type="project" value="InterPro"/>
</dbReference>
<dbReference type="Gene3D" id="1.10.10.60">
    <property type="entry name" value="Homeodomain-like"/>
    <property type="match status" value="1"/>
</dbReference>
<dbReference type="InterPro" id="IPR018060">
    <property type="entry name" value="HTH_AraC"/>
</dbReference>
<dbReference type="InterPro" id="IPR018062">
    <property type="entry name" value="HTH_AraC-typ_CS"/>
</dbReference>
<dbReference type="Pfam" id="PF12833">
    <property type="entry name" value="HTH_18"/>
    <property type="match status" value="1"/>
</dbReference>
<dbReference type="SMART" id="SM00342">
    <property type="entry name" value="HTH_ARAC"/>
    <property type="match status" value="1"/>
</dbReference>
<dbReference type="PROSITE" id="PS00041">
    <property type="entry name" value="HTH_ARAC_FAMILY_1"/>
    <property type="match status" value="1"/>
</dbReference>
<dbReference type="PROSITE" id="PS01124">
    <property type="entry name" value="HTH_ARAC_FAMILY_2"/>
    <property type="match status" value="1"/>
</dbReference>